<organism>
    <name type="scientific">Ralstonia nicotianae (strain ATCC BAA-1114 / GMI1000)</name>
    <name type="common">Ralstonia solanacearum</name>
    <dbReference type="NCBI Taxonomy" id="267608"/>
    <lineage>
        <taxon>Bacteria</taxon>
        <taxon>Pseudomonadati</taxon>
        <taxon>Pseudomonadota</taxon>
        <taxon>Betaproteobacteria</taxon>
        <taxon>Burkholderiales</taxon>
        <taxon>Burkholderiaceae</taxon>
        <taxon>Ralstonia</taxon>
        <taxon>Ralstonia solanacearum species complex</taxon>
    </lineage>
</organism>
<name>HPRK_RALN1</name>
<sequence>MELTGVTAQSIFDDNAADLKLSWVAGLEGADRAFDVDFAKEATSAADLVGHLNLIHPNRIQVLGKPEITYYQRLSEENRKRQMGELILLEPPFLVVADGVDPPPDLELRCTRSSTPLFTSPISSAAVIDHLRLYLSRISAPRVTMHGVFLDILGMGVLIMGDSGLGKSELGLELISRGHGLVADDAVDFVRLGPDFIEGRCPPLLQNLLEVRGLGLLDIKTIFGETAVRRKMKIKLIVQLVRRNDGEFERLPLDSQYMDVLGLPIHMVKIQVAAGRNLAVLVEAAVRNTILRLRGIDTLRDFMDRQRAAMQAEAASHSPQGRLL</sequence>
<evidence type="ECO:0000255" key="1">
    <source>
        <dbReference type="HAMAP-Rule" id="MF_01249"/>
    </source>
</evidence>
<reference key="1">
    <citation type="journal article" date="2002" name="Nature">
        <title>Genome sequence of the plant pathogen Ralstonia solanacearum.</title>
        <authorList>
            <person name="Salanoubat M."/>
            <person name="Genin S."/>
            <person name="Artiguenave F."/>
            <person name="Gouzy J."/>
            <person name="Mangenot S."/>
            <person name="Arlat M."/>
            <person name="Billault A."/>
            <person name="Brottier P."/>
            <person name="Camus J.-C."/>
            <person name="Cattolico L."/>
            <person name="Chandler M."/>
            <person name="Choisne N."/>
            <person name="Claudel-Renard C."/>
            <person name="Cunnac S."/>
            <person name="Demange N."/>
            <person name="Gaspin C."/>
            <person name="Lavie M."/>
            <person name="Moisan A."/>
            <person name="Robert C."/>
            <person name="Saurin W."/>
            <person name="Schiex T."/>
            <person name="Siguier P."/>
            <person name="Thebault P."/>
            <person name="Whalen M."/>
            <person name="Wincker P."/>
            <person name="Levy M."/>
            <person name="Weissenbach J."/>
            <person name="Boucher C.A."/>
        </authorList>
    </citation>
    <scope>NUCLEOTIDE SEQUENCE [LARGE SCALE GENOMIC DNA]</scope>
    <source>
        <strain>ATCC BAA-1114 / GMI1000</strain>
    </source>
</reference>
<dbReference type="EC" id="2.7.11.-" evidence="1"/>
<dbReference type="EC" id="2.7.4.-" evidence="1"/>
<dbReference type="EMBL" id="AL646052">
    <property type="protein sequence ID" value="CAD13933.1"/>
    <property type="molecule type" value="Genomic_DNA"/>
</dbReference>
<dbReference type="RefSeq" id="WP_011000367.1">
    <property type="nucleotide sequence ID" value="NC_003295.1"/>
</dbReference>
<dbReference type="SMR" id="Q8Y2D1"/>
<dbReference type="STRING" id="267608.RSc0405"/>
<dbReference type="EnsemblBacteria" id="CAD13933">
    <property type="protein sequence ID" value="CAD13933"/>
    <property type="gene ID" value="RSc0405"/>
</dbReference>
<dbReference type="GeneID" id="97322347"/>
<dbReference type="KEGG" id="rso:RSc0405"/>
<dbReference type="eggNOG" id="COG1493">
    <property type="taxonomic scope" value="Bacteria"/>
</dbReference>
<dbReference type="HOGENOM" id="CLU_052030_0_2_4"/>
<dbReference type="Proteomes" id="UP000001436">
    <property type="component" value="Chromosome"/>
</dbReference>
<dbReference type="GO" id="GO:0005524">
    <property type="term" value="F:ATP binding"/>
    <property type="evidence" value="ECO:0007669"/>
    <property type="project" value="UniProtKB-UniRule"/>
</dbReference>
<dbReference type="GO" id="GO:0000287">
    <property type="term" value="F:magnesium ion binding"/>
    <property type="evidence" value="ECO:0007669"/>
    <property type="project" value="UniProtKB-UniRule"/>
</dbReference>
<dbReference type="GO" id="GO:0000155">
    <property type="term" value="F:phosphorelay sensor kinase activity"/>
    <property type="evidence" value="ECO:0007669"/>
    <property type="project" value="InterPro"/>
</dbReference>
<dbReference type="GO" id="GO:0004674">
    <property type="term" value="F:protein serine/threonine kinase activity"/>
    <property type="evidence" value="ECO:0007669"/>
    <property type="project" value="UniProtKB-KW"/>
</dbReference>
<dbReference type="GO" id="GO:0004712">
    <property type="term" value="F:protein serine/threonine/tyrosine kinase activity"/>
    <property type="evidence" value="ECO:0007669"/>
    <property type="project" value="UniProtKB-UniRule"/>
</dbReference>
<dbReference type="GO" id="GO:0006109">
    <property type="term" value="P:regulation of carbohydrate metabolic process"/>
    <property type="evidence" value="ECO:0007669"/>
    <property type="project" value="UniProtKB-UniRule"/>
</dbReference>
<dbReference type="CDD" id="cd01918">
    <property type="entry name" value="HprK_C"/>
    <property type="match status" value="1"/>
</dbReference>
<dbReference type="FunFam" id="3.40.50.300:FF:000174">
    <property type="entry name" value="HPr kinase/phosphorylase"/>
    <property type="match status" value="1"/>
</dbReference>
<dbReference type="Gene3D" id="3.40.1390.20">
    <property type="entry name" value="HprK N-terminal domain-like"/>
    <property type="match status" value="1"/>
</dbReference>
<dbReference type="Gene3D" id="3.40.50.300">
    <property type="entry name" value="P-loop containing nucleotide triphosphate hydrolases"/>
    <property type="match status" value="1"/>
</dbReference>
<dbReference type="HAMAP" id="MF_01249">
    <property type="entry name" value="HPr_kinase"/>
    <property type="match status" value="1"/>
</dbReference>
<dbReference type="InterPro" id="IPR003755">
    <property type="entry name" value="HPr(Ser)_kin/Pase"/>
</dbReference>
<dbReference type="InterPro" id="IPR011104">
    <property type="entry name" value="Hpr_kin/Pase_C"/>
</dbReference>
<dbReference type="InterPro" id="IPR011126">
    <property type="entry name" value="Hpr_kin/Pase_Hpr_N"/>
</dbReference>
<dbReference type="InterPro" id="IPR027417">
    <property type="entry name" value="P-loop_NTPase"/>
</dbReference>
<dbReference type="InterPro" id="IPR028979">
    <property type="entry name" value="Ser_kin/Pase_Hpr-like_N_sf"/>
</dbReference>
<dbReference type="NCBIfam" id="TIGR00679">
    <property type="entry name" value="hpr-ser"/>
    <property type="match status" value="1"/>
</dbReference>
<dbReference type="PANTHER" id="PTHR30305:SF1">
    <property type="entry name" value="HPR KINASE_PHOSPHORYLASE"/>
    <property type="match status" value="1"/>
</dbReference>
<dbReference type="PANTHER" id="PTHR30305">
    <property type="entry name" value="PROTEIN YJDM-RELATED"/>
    <property type="match status" value="1"/>
</dbReference>
<dbReference type="Pfam" id="PF07475">
    <property type="entry name" value="Hpr_kinase_C"/>
    <property type="match status" value="1"/>
</dbReference>
<dbReference type="Pfam" id="PF02603">
    <property type="entry name" value="Hpr_kinase_N"/>
    <property type="match status" value="1"/>
</dbReference>
<dbReference type="SUPFAM" id="SSF75138">
    <property type="entry name" value="HprK N-terminal domain-like"/>
    <property type="match status" value="1"/>
</dbReference>
<dbReference type="SUPFAM" id="SSF53795">
    <property type="entry name" value="PEP carboxykinase-like"/>
    <property type="match status" value="1"/>
</dbReference>
<gene>
    <name evidence="1" type="primary">hprK</name>
    <name type="synonym">ptsK</name>
    <name type="ordered locus">RSc0405</name>
    <name type="ORF">RS03373</name>
</gene>
<keyword id="KW-0067">ATP-binding</keyword>
<keyword id="KW-0418">Kinase</keyword>
<keyword id="KW-0460">Magnesium</keyword>
<keyword id="KW-0479">Metal-binding</keyword>
<keyword id="KW-0511">Multifunctional enzyme</keyword>
<keyword id="KW-0547">Nucleotide-binding</keyword>
<keyword id="KW-1185">Reference proteome</keyword>
<keyword id="KW-0723">Serine/threonine-protein kinase</keyword>
<keyword id="KW-0808">Transferase</keyword>
<comment type="function">
    <text evidence="1">Catalyzes the ATP- as well as the pyrophosphate-dependent phosphorylation of a specific serine residue in HPr, a phosphocarrier protein of the phosphoenolpyruvate-dependent sugar phosphotransferase system (PTS). HprK/P also catalyzes the pyrophosphate-producing, inorganic phosphate-dependent dephosphorylation (phosphorolysis) of seryl-phosphorylated HPr (P-Ser-HPr).</text>
</comment>
<comment type="catalytic activity">
    <reaction evidence="1">
        <text>[HPr protein]-L-serine + ATP = [HPr protein]-O-phospho-L-serine + ADP + H(+)</text>
        <dbReference type="Rhea" id="RHEA:46600"/>
        <dbReference type="Rhea" id="RHEA-COMP:11602"/>
        <dbReference type="Rhea" id="RHEA-COMP:11603"/>
        <dbReference type="ChEBI" id="CHEBI:15378"/>
        <dbReference type="ChEBI" id="CHEBI:29999"/>
        <dbReference type="ChEBI" id="CHEBI:30616"/>
        <dbReference type="ChEBI" id="CHEBI:83421"/>
        <dbReference type="ChEBI" id="CHEBI:456216"/>
    </reaction>
</comment>
<comment type="catalytic activity">
    <reaction evidence="1">
        <text>[HPr protein]-O-phospho-L-serine + phosphate + H(+) = [HPr protein]-L-serine + diphosphate</text>
        <dbReference type="Rhea" id="RHEA:46604"/>
        <dbReference type="Rhea" id="RHEA-COMP:11602"/>
        <dbReference type="Rhea" id="RHEA-COMP:11603"/>
        <dbReference type="ChEBI" id="CHEBI:15378"/>
        <dbReference type="ChEBI" id="CHEBI:29999"/>
        <dbReference type="ChEBI" id="CHEBI:33019"/>
        <dbReference type="ChEBI" id="CHEBI:43474"/>
        <dbReference type="ChEBI" id="CHEBI:83421"/>
    </reaction>
</comment>
<comment type="cofactor">
    <cofactor evidence="1">
        <name>Mg(2+)</name>
        <dbReference type="ChEBI" id="CHEBI:18420"/>
    </cofactor>
</comment>
<comment type="subunit">
    <text evidence="1">Homohexamer.</text>
</comment>
<comment type="domain">
    <text evidence="1">The Walker A ATP-binding motif also binds Pi and PPi.</text>
</comment>
<comment type="miscellaneous">
    <text evidence="1">Both phosphorylation and phosphorolysis are carried out by the same active site and suggest a common mechanism for both reactions.</text>
</comment>
<comment type="similarity">
    <text evidence="1">Belongs to the HPrK/P family.</text>
</comment>
<accession>Q8Y2D1</accession>
<proteinExistence type="inferred from homology"/>
<protein>
    <recommendedName>
        <fullName evidence="1">HPr kinase/phosphorylase</fullName>
        <shortName evidence="1">HPrK/P</shortName>
        <ecNumber evidence="1">2.7.11.-</ecNumber>
        <ecNumber evidence="1">2.7.4.-</ecNumber>
    </recommendedName>
    <alternativeName>
        <fullName evidence="1">HPr(Ser) kinase/phosphorylase</fullName>
    </alternativeName>
</protein>
<feature type="chain" id="PRO_0000058980" description="HPr kinase/phosphorylase">
    <location>
        <begin position="1"/>
        <end position="324"/>
    </location>
</feature>
<feature type="region of interest" description="Important for the catalytic mechanism of both phosphorylation and dephosphorylation" evidence="1">
    <location>
        <begin position="209"/>
        <end position="218"/>
    </location>
</feature>
<feature type="region of interest" description="Important for the catalytic mechanism of dephosphorylation" evidence="1">
    <location>
        <begin position="271"/>
        <end position="276"/>
    </location>
</feature>
<feature type="active site" evidence="1">
    <location>
        <position position="146"/>
    </location>
</feature>
<feature type="active site" evidence="1">
    <location>
        <position position="167"/>
    </location>
</feature>
<feature type="active site" description="Proton acceptor; for phosphorylation activity. Proton donor; for dephosphorylation activity" evidence="1">
    <location>
        <position position="185"/>
    </location>
</feature>
<feature type="active site" evidence="1">
    <location>
        <position position="250"/>
    </location>
</feature>
<feature type="binding site" evidence="1">
    <location>
        <begin position="161"/>
        <end position="168"/>
    </location>
    <ligand>
        <name>ATP</name>
        <dbReference type="ChEBI" id="CHEBI:30616"/>
    </ligand>
</feature>
<feature type="binding site" evidence="1">
    <location>
        <position position="168"/>
    </location>
    <ligand>
        <name>Mg(2+)</name>
        <dbReference type="ChEBI" id="CHEBI:18420"/>
    </ligand>
</feature>
<feature type="binding site" evidence="1">
    <location>
        <position position="210"/>
    </location>
    <ligand>
        <name>Mg(2+)</name>
        <dbReference type="ChEBI" id="CHEBI:18420"/>
    </ligand>
</feature>